<feature type="chain" id="PRO_0000338394" description="Calcium/calmodulin-dependent protein kinase II inhibitor 1">
    <location>
        <begin position="1"/>
        <end position="78"/>
    </location>
</feature>
<feature type="region of interest" description="CAMK2 inhibitory domain" evidence="1">
    <location>
        <begin position="41"/>
        <end position="68"/>
    </location>
</feature>
<evidence type="ECO:0000250" key="1"/>
<evidence type="ECO:0000250" key="2">
    <source>
        <dbReference type="UniProtKB" id="Q9JI15"/>
    </source>
</evidence>
<evidence type="ECO:0000269" key="3">
    <source>
    </source>
</evidence>
<evidence type="ECO:0000269" key="4">
    <source>
    </source>
</evidence>
<evidence type="ECO:0000269" key="5">
    <source>
    </source>
</evidence>
<evidence type="ECO:0000269" key="6">
    <source>
    </source>
</evidence>
<evidence type="ECO:0000269" key="7">
    <source>
    </source>
</evidence>
<evidence type="ECO:0000269" key="8">
    <source>
    </source>
</evidence>
<evidence type="ECO:0000305" key="9"/>
<accession>Q6QWF9</accession>
<name>CK2N1_MOUSE</name>
<gene>
    <name type="primary">Camk2n1</name>
</gene>
<proteinExistence type="evidence at protein level"/>
<organism>
    <name type="scientific">Mus musculus</name>
    <name type="common">Mouse</name>
    <dbReference type="NCBI Taxonomy" id="10090"/>
    <lineage>
        <taxon>Eukaryota</taxon>
        <taxon>Metazoa</taxon>
        <taxon>Chordata</taxon>
        <taxon>Craniata</taxon>
        <taxon>Vertebrata</taxon>
        <taxon>Euteleostomi</taxon>
        <taxon>Mammalia</taxon>
        <taxon>Eutheria</taxon>
        <taxon>Euarchontoglires</taxon>
        <taxon>Glires</taxon>
        <taxon>Rodentia</taxon>
        <taxon>Myomorpha</taxon>
        <taxon>Muroidea</taxon>
        <taxon>Muridae</taxon>
        <taxon>Murinae</taxon>
        <taxon>Mus</taxon>
        <taxon>Mus</taxon>
    </lineage>
</organism>
<comment type="function">
    <text evidence="2 6 7 8">Potent and specific inhibitor of CaM-kinase II (CAMK2) (By similarity). Plays a role in the maintenance of long-term retrieval-induced memory in response to contextual fear (PubMed:28642476). Modulates blood pressure and vascular reactivity via regulation of CAMK2 activity in addition to regulation of left ventricular mass (By similarity). Mediates the NLRP3 inflammasome in cardiomyocytes via acting as an inhibitor of the MAPK14/p38 and MAPK8/JNK pathways, thereby regulating ventricular remodeling and cardiac rhythm post-myocardial infarction (PubMed:33746041). Negatively effects insulin sensitivity and promotes lipid formation in adipose tissues independent of CAMK2 signaling (PubMed:31327268).</text>
</comment>
<comment type="subunit">
    <text evidence="2">Interacts with CAMK2B; the presence of Ca(2+)/calmodulin increases the interaction but is not essential (By similarity). Interacts with CAMK2A; this interaction requires CAMK2A activation by Ca(2+) (By similarity).</text>
</comment>
<comment type="subcellular location">
    <subcellularLocation>
        <location evidence="5 6">Synapse</location>
    </subcellularLocation>
    <subcellularLocation>
        <location evidence="2">Cell projection</location>
        <location evidence="2">Dendrite</location>
    </subcellularLocation>
    <subcellularLocation>
        <location evidence="5">Postsynaptic density</location>
    </subcellularLocation>
</comment>
<comment type="tissue specificity">
    <text evidence="5 8">Expressed in the brain (at protein level) (PubMed:17350603). Expressed in cardiomyocytes but not cardiac fibroblasts (at protein level) (PubMed:33746041).</text>
</comment>
<comment type="induction">
    <text evidence="3 4 6">Up-regulated during retrieval and consolidation of fear memory (PubMed:16819996, PubMed:28642476). Down-regulated in brain during Japanese encephalitis virus (JEV) and rabies virus infection (PubMed:17010311).</text>
</comment>
<comment type="disruption phenotype">
    <text evidence="6 8">Knockout mice show normal growth rates (PubMed:33746041). Increased expression of inflammatory markers and enhanced recruitment of macrophages to the cardiac infarct border 3 days post-myocardial infarction (MI) (PubMed:33746041). Increased infarct size, interstitial fibrosis, and area of cardiac hypertrophy, leading to decreased left ventricular ejection fractions, fractional shortening and increased spontaneous ventricular arrhythmia at 28 days post MI (PubMed:33746041). Overall survival of mice following MI was significantly decreased (PubMed:33746041). In hippocampal knockdown mice, long-term retrieval-induced memory in response to contextual fear is impaired (PubMed:28642476). Increase in Camk2a T-296 autophosphorylation and Gria1/GluA1 abundance following conditioning and long-term memory retrieval (PubMed:28642476).</text>
</comment>
<comment type="similarity">
    <text evidence="9">Belongs to the CAMK2N family.</text>
</comment>
<protein>
    <recommendedName>
        <fullName>Calcium/calmodulin-dependent protein kinase II inhibitor 1</fullName>
    </recommendedName>
    <alternativeName>
        <fullName>calcium/calmodulin-dependent protein kinase II inhibitor alpha</fullName>
        <shortName>mCaMKIINalpha</shortName>
    </alternativeName>
</protein>
<sequence length="78" mass="8513">MSEVLPYGDEKLSPYGDGGDVGQIFSCRLQDTNNFFGAGQSKRPPKLGQIGRSKRVVIEDDRIDDVLKTMTDKAPPGV</sequence>
<reference key="1">
    <citation type="journal article" date="2006" name="Biochem. Biophys. Res. Commun.">
        <title>Regulation of Ca2+/calmodulin kinase II inhibitor alpha (CaMKIINalpha) in virus-infected mouse brain.</title>
        <authorList>
            <person name="Saha S."/>
            <person name="Ramanathan A."/>
            <person name="Rangarajan P.N."/>
        </authorList>
    </citation>
    <scope>NUCLEOTIDE SEQUENCE [MRNA]</scope>
    <scope>INDUCTION</scope>
    <source>
        <strain>SWR/J</strain>
    </source>
</reference>
<reference key="2">
    <citation type="journal article" date="2009" name="PLoS Biol.">
        <title>Lineage-specific biology revealed by a finished genome assembly of the mouse.</title>
        <authorList>
            <person name="Church D.M."/>
            <person name="Goodstadt L."/>
            <person name="Hillier L.W."/>
            <person name="Zody M.C."/>
            <person name="Goldstein S."/>
            <person name="She X."/>
            <person name="Bult C.J."/>
            <person name="Agarwala R."/>
            <person name="Cherry J.L."/>
            <person name="DiCuccio M."/>
            <person name="Hlavina W."/>
            <person name="Kapustin Y."/>
            <person name="Meric P."/>
            <person name="Maglott D."/>
            <person name="Birtle Z."/>
            <person name="Marques A.C."/>
            <person name="Graves T."/>
            <person name="Zhou S."/>
            <person name="Teague B."/>
            <person name="Potamousis K."/>
            <person name="Churas C."/>
            <person name="Place M."/>
            <person name="Herschleb J."/>
            <person name="Runnheim R."/>
            <person name="Forrest D."/>
            <person name="Amos-Landgraf J."/>
            <person name="Schwartz D.C."/>
            <person name="Cheng Z."/>
            <person name="Lindblad-Toh K."/>
            <person name="Eichler E.E."/>
            <person name="Ponting C.P."/>
        </authorList>
    </citation>
    <scope>NUCLEOTIDE SEQUENCE [LARGE SCALE GENOMIC DNA]</scope>
    <source>
        <strain>C57BL/6J</strain>
    </source>
</reference>
<reference key="3">
    <citation type="journal article" date="2006" name="Eur. J. Neurosci.">
        <title>An endogenous inhibitor of calcium/calmodulin-dependent kinase II is up-regulated during consolidation of fear memory.</title>
        <authorList>
            <person name="Lepicard E.M."/>
            <person name="Mizuno K."/>
            <person name="Antunes-Martins A."/>
            <person name="von Hertzen L.S."/>
            <person name="Giese K.P."/>
        </authorList>
    </citation>
    <scope>INDUCTION</scope>
</reference>
<reference key="4">
    <citation type="journal article" date="2007" name="Brain Res.">
        <title>Characterization of mouse neuronal Ca2+/calmodulin kinase II inhibitor alpha.</title>
        <authorList>
            <person name="Saha S."/>
            <person name="Datta K."/>
            <person name="Rangarajan P."/>
        </authorList>
    </citation>
    <scope>TISSUE SPECIFICITY</scope>
    <scope>SUBCELLULAR LOCATION</scope>
</reference>
<reference key="5">
    <citation type="journal article" date="2010" name="Cell">
        <title>A tissue-specific atlas of mouse protein phosphorylation and expression.</title>
        <authorList>
            <person name="Huttlin E.L."/>
            <person name="Jedrychowski M.P."/>
            <person name="Elias J.E."/>
            <person name="Goswami T."/>
            <person name="Rad R."/>
            <person name="Beausoleil S.A."/>
            <person name="Villen J."/>
            <person name="Haas W."/>
            <person name="Sowa M.E."/>
            <person name="Gygi S.P."/>
        </authorList>
    </citation>
    <scope>IDENTIFICATION BY MASS SPECTROMETRY [LARGE SCALE ANALYSIS]</scope>
    <source>
        <tissue>Brain</tissue>
    </source>
</reference>
<reference key="6">
    <citation type="journal article" date="2017" name="Sci. Rep.">
        <title>Prevention of long-term memory loss after retrieval by an endogenous CaMKII inhibitor.</title>
        <authorList>
            <person name="Vigil F.A."/>
            <person name="Mizuno K."/>
            <person name="Lucchesi W."/>
            <person name="Valls-Comamala V."/>
            <person name="Giese K.P."/>
        </authorList>
    </citation>
    <scope>FUNCTION</scope>
    <scope>SUBCELLULAR LOCATION</scope>
    <scope>INDUCTION BY MEMORY RETRIEVAL</scope>
    <scope>DISRUPTION PHENOTYPE</scope>
</reference>
<reference key="7">
    <citation type="journal article" date="2019" name="Hypertension">
        <title>Camk2n1 Is a Negative Regulator of Blood Pressure, Left Ventricular Mass, Insulin Sensitivity, and Promotes Adiposity.</title>
        <authorList>
            <person name="Alfazema N."/>
            <person name="Barrier M."/>
            <person name="de Proce S.M."/>
            <person name="Menzies R.I."/>
            <person name="Carter R."/>
            <person name="Stewart K."/>
            <person name="Diaz A.G."/>
            <person name="Moyon B."/>
            <person name="Webster Z."/>
            <person name="Bellamy C.O.C."/>
            <person name="Arends M.J."/>
            <person name="Stimson R.H."/>
            <person name="Morton N.M."/>
            <person name="Aitman T.J."/>
            <person name="Coan P.M."/>
        </authorList>
    </citation>
    <scope>FUNCTION</scope>
</reference>
<reference key="8">
    <citation type="journal article" date="2021" name="Free Radic. Biol. Med.">
        <title>Loss of Camk2n1 aggravates cardiac remodeling and malignant ventricular arrhythmia after myocardial infarction in mice via NLRP3 inflammasome activation.</title>
        <authorList>
            <person name="Wei Z."/>
            <person name="Fei Y."/>
            <person name="Wang Q."/>
            <person name="Hou J."/>
            <person name="Cai X."/>
            <person name="Yang Y."/>
            <person name="Chen T."/>
            <person name="Xu Q."/>
            <person name="Wang Y."/>
            <person name="Li Y.G."/>
        </authorList>
    </citation>
    <scope>FUNCTION</scope>
    <scope>TISSUE SPECIFICITY</scope>
    <scope>DISRUPTION PHENOTYPE</scope>
</reference>
<keyword id="KW-0966">Cell projection</keyword>
<keyword id="KW-0649">Protein kinase inhibitor</keyword>
<keyword id="KW-1185">Reference proteome</keyword>
<keyword id="KW-0770">Synapse</keyword>
<dbReference type="EMBL" id="AY523601">
    <property type="protein sequence ID" value="AAS02090.1"/>
    <property type="molecule type" value="mRNA"/>
</dbReference>
<dbReference type="EMBL" id="AL807249">
    <property type="status" value="NOT_ANNOTATED_CDS"/>
    <property type="molecule type" value="Genomic_DNA"/>
</dbReference>
<dbReference type="CCDS" id="CCDS38930.1"/>
<dbReference type="RefSeq" id="NP_079727.1">
    <property type="nucleotide sequence ID" value="NM_025451.2"/>
</dbReference>
<dbReference type="SMR" id="Q6QWF9"/>
<dbReference type="BioGRID" id="211334">
    <property type="interactions" value="1"/>
</dbReference>
<dbReference type="FunCoup" id="Q6QWF9">
    <property type="interactions" value="98"/>
</dbReference>
<dbReference type="STRING" id="10090.ENSMUSP00000060349"/>
<dbReference type="iPTMnet" id="Q6QWF9"/>
<dbReference type="PhosphoSitePlus" id="Q6QWF9"/>
<dbReference type="PaxDb" id="10090-ENSMUSP00000060349"/>
<dbReference type="ProteomicsDB" id="285453"/>
<dbReference type="Pumba" id="Q6QWF9"/>
<dbReference type="Antibodypedia" id="53235">
    <property type="antibodies" value="73 antibodies from 16 providers"/>
</dbReference>
<dbReference type="Ensembl" id="ENSMUST00000050918.4">
    <property type="protein sequence ID" value="ENSMUSP00000060349.4"/>
    <property type="gene ID" value="ENSMUSG00000046447.4"/>
</dbReference>
<dbReference type="GeneID" id="66259"/>
<dbReference type="KEGG" id="mmu:66259"/>
<dbReference type="UCSC" id="uc008vkz.2">
    <property type="organism name" value="mouse"/>
</dbReference>
<dbReference type="AGR" id="MGI:1913509"/>
<dbReference type="CTD" id="55450"/>
<dbReference type="MGI" id="MGI:1913509">
    <property type="gene designation" value="Camk2n1"/>
</dbReference>
<dbReference type="VEuPathDB" id="HostDB:ENSMUSG00000046447"/>
<dbReference type="eggNOG" id="ENOG502S6QW">
    <property type="taxonomic scope" value="Eukaryota"/>
</dbReference>
<dbReference type="GeneTree" id="ENSGT00390000004940"/>
<dbReference type="HOGENOM" id="CLU_197183_0_0_1"/>
<dbReference type="InParanoid" id="Q6QWF9"/>
<dbReference type="OrthoDB" id="9922824at2759"/>
<dbReference type="PhylomeDB" id="Q6QWF9"/>
<dbReference type="TreeFam" id="TF333175"/>
<dbReference type="BioGRID-ORCS" id="66259">
    <property type="hits" value="2 hits in 77 CRISPR screens"/>
</dbReference>
<dbReference type="ChiTaRS" id="Camk2n1">
    <property type="organism name" value="mouse"/>
</dbReference>
<dbReference type="PRO" id="PR:Q6QWF9"/>
<dbReference type="Proteomes" id="UP000000589">
    <property type="component" value="Chromosome 4"/>
</dbReference>
<dbReference type="RNAct" id="Q6QWF9">
    <property type="molecule type" value="protein"/>
</dbReference>
<dbReference type="Bgee" id="ENSMUSG00000046447">
    <property type="expression patterns" value="Expressed in prefrontal cortex and 210 other cell types or tissues"/>
</dbReference>
<dbReference type="GO" id="GO:0030425">
    <property type="term" value="C:dendrite"/>
    <property type="evidence" value="ECO:0007669"/>
    <property type="project" value="UniProtKB-SubCell"/>
</dbReference>
<dbReference type="GO" id="GO:0014069">
    <property type="term" value="C:postsynaptic density"/>
    <property type="evidence" value="ECO:0000314"/>
    <property type="project" value="MGI"/>
</dbReference>
<dbReference type="GO" id="GO:0045202">
    <property type="term" value="C:synapse"/>
    <property type="evidence" value="ECO:0000314"/>
    <property type="project" value="UniProtKB"/>
</dbReference>
<dbReference type="GO" id="GO:0004860">
    <property type="term" value="F:protein kinase inhibitor activity"/>
    <property type="evidence" value="ECO:0000314"/>
    <property type="project" value="MGI"/>
</dbReference>
<dbReference type="GO" id="GO:0007616">
    <property type="term" value="P:long-term memory"/>
    <property type="evidence" value="ECO:0000315"/>
    <property type="project" value="UniProtKB"/>
</dbReference>
<dbReference type="GO" id="GO:0050729">
    <property type="term" value="P:positive regulation of inflammatory response"/>
    <property type="evidence" value="ECO:0000314"/>
    <property type="project" value="UniProtKB"/>
</dbReference>
<dbReference type="InterPro" id="IPR026779">
    <property type="entry name" value="Camk2n"/>
</dbReference>
<dbReference type="PANTHER" id="PTHR31007">
    <property type="entry name" value="CALCIUM/CALMODULIN-DEPENDENT PROTEIN KINASE II INHIBITOR 2"/>
    <property type="match status" value="1"/>
</dbReference>
<dbReference type="PANTHER" id="PTHR31007:SF3">
    <property type="entry name" value="CALCIUM_CALMODULIN-DEPENDENT PROTEIN KINASE II INHIBITOR 1"/>
    <property type="match status" value="1"/>
</dbReference>
<dbReference type="Pfam" id="PF15170">
    <property type="entry name" value="CaM-KIIN"/>
    <property type="match status" value="1"/>
</dbReference>